<protein>
    <recommendedName>
        <fullName evidence="11">Periplasmic oligopeptide-binding protein OppA</fullName>
    </recommendedName>
</protein>
<feature type="signal peptide" evidence="5">
    <location>
        <begin position="1"/>
        <end position="26"/>
    </location>
</feature>
<feature type="chain" id="PRO_0000031798" description="Periplasmic oligopeptide-binding protein OppA">
    <location>
        <begin position="27"/>
        <end position="543"/>
    </location>
</feature>
<feature type="disulfide bond" evidence="1 2 6 7 8 9 31 32 33 34 35 36 37 38">
    <location>
        <begin position="297"/>
        <end position="443"/>
    </location>
</feature>
<feature type="sequence conflict" description="In Ref. 1; CAA27785 and 2; CAA29039." evidence="11" ref="1 2">
    <original>SAA</original>
    <variation>TP</variation>
    <location>
        <begin position="22"/>
        <end position="24"/>
    </location>
</feature>
<feature type="strand" evidence="40">
    <location>
        <begin position="40"/>
        <end position="44"/>
    </location>
</feature>
<feature type="turn" evidence="39">
    <location>
        <begin position="54"/>
        <end position="56"/>
    </location>
</feature>
<feature type="helix" evidence="40">
    <location>
        <begin position="60"/>
        <end position="69"/>
    </location>
</feature>
<feature type="strand" evidence="40">
    <location>
        <begin position="73"/>
        <end position="76"/>
    </location>
</feature>
<feature type="strand" evidence="40">
    <location>
        <begin position="82"/>
        <end position="93"/>
    </location>
</feature>
<feature type="turn" evidence="40">
    <location>
        <begin position="94"/>
        <end position="96"/>
    </location>
</feature>
<feature type="strand" evidence="40">
    <location>
        <begin position="97"/>
        <end position="102"/>
    </location>
</feature>
<feature type="helix" evidence="40">
    <location>
        <begin position="116"/>
        <end position="127"/>
    </location>
</feature>
<feature type="helix" evidence="40">
    <location>
        <begin position="129"/>
        <end position="131"/>
    </location>
</feature>
<feature type="turn" evidence="40">
    <location>
        <begin position="134"/>
        <end position="137"/>
    </location>
</feature>
<feature type="helix" evidence="40">
    <location>
        <begin position="138"/>
        <end position="141"/>
    </location>
</feature>
<feature type="helix" evidence="40">
    <location>
        <begin position="147"/>
        <end position="151"/>
    </location>
</feature>
<feature type="helix" evidence="40">
    <location>
        <begin position="157"/>
        <end position="159"/>
    </location>
</feature>
<feature type="strand" evidence="40">
    <location>
        <begin position="160"/>
        <end position="166"/>
    </location>
</feature>
<feature type="strand" evidence="40">
    <location>
        <begin position="169"/>
        <end position="176"/>
    </location>
</feature>
<feature type="helix" evidence="40">
    <location>
        <begin position="181"/>
        <end position="184"/>
    </location>
</feature>
<feature type="helix" evidence="40">
    <location>
        <begin position="188"/>
        <end position="190"/>
    </location>
</feature>
<feature type="helix" evidence="40">
    <location>
        <begin position="195"/>
        <end position="201"/>
    </location>
</feature>
<feature type="helix" evidence="40">
    <location>
        <begin position="202"/>
        <end position="204"/>
    </location>
</feature>
<feature type="turn" evidence="40">
    <location>
        <begin position="208"/>
        <end position="210"/>
    </location>
</feature>
<feature type="strand" evidence="40">
    <location>
        <begin position="215"/>
        <end position="223"/>
    </location>
</feature>
<feature type="turn" evidence="40">
    <location>
        <begin position="224"/>
        <end position="226"/>
    </location>
</feature>
<feature type="strand" evidence="40">
    <location>
        <begin position="227"/>
        <end position="232"/>
    </location>
</feature>
<feature type="helix" evidence="40">
    <location>
        <begin position="239"/>
        <end position="241"/>
    </location>
</feature>
<feature type="strand" evidence="40">
    <location>
        <begin position="246"/>
        <end position="250"/>
    </location>
</feature>
<feature type="helix" evidence="40">
    <location>
        <begin position="255"/>
        <end position="263"/>
    </location>
</feature>
<feature type="turn" evidence="40">
    <location>
        <begin position="276"/>
        <end position="278"/>
    </location>
</feature>
<feature type="helix" evidence="40">
    <location>
        <begin position="279"/>
        <end position="285"/>
    </location>
</feature>
<feature type="helix" evidence="40">
    <location>
        <begin position="287"/>
        <end position="289"/>
    </location>
</feature>
<feature type="strand" evidence="40">
    <location>
        <begin position="290"/>
        <end position="303"/>
    </location>
</feature>
<feature type="turn" evidence="40">
    <location>
        <begin position="308"/>
        <end position="311"/>
    </location>
</feature>
<feature type="helix" evidence="40">
    <location>
        <begin position="313"/>
        <end position="322"/>
    </location>
</feature>
<feature type="helix" evidence="40">
    <location>
        <begin position="325"/>
        <end position="330"/>
    </location>
</feature>
<feature type="turn" evidence="40">
    <location>
        <begin position="331"/>
        <end position="333"/>
    </location>
</feature>
<feature type="strand" evidence="40">
    <location>
        <begin position="341"/>
        <end position="344"/>
    </location>
</feature>
<feature type="helix" evidence="40">
    <location>
        <begin position="357"/>
        <end position="360"/>
    </location>
</feature>
<feature type="helix" evidence="40">
    <location>
        <begin position="363"/>
        <end position="376"/>
    </location>
</feature>
<feature type="strand" evidence="40">
    <location>
        <begin position="381"/>
        <end position="383"/>
    </location>
</feature>
<feature type="strand" evidence="40">
    <location>
        <begin position="386"/>
        <end position="393"/>
    </location>
</feature>
<feature type="helix" evidence="40">
    <location>
        <begin position="395"/>
        <end position="412"/>
    </location>
</feature>
<feature type="strand" evidence="40">
    <location>
        <begin position="415"/>
        <end position="421"/>
    </location>
</feature>
<feature type="helix" evidence="40">
    <location>
        <begin position="423"/>
        <end position="432"/>
    </location>
</feature>
<feature type="strand" evidence="40">
    <location>
        <begin position="436"/>
        <end position="443"/>
    </location>
</feature>
<feature type="strand" evidence="40">
    <location>
        <begin position="445"/>
        <end position="448"/>
    </location>
</feature>
<feature type="helix" evidence="40">
    <location>
        <begin position="450"/>
        <end position="453"/>
    </location>
</feature>
<feature type="helix" evidence="40">
    <location>
        <begin position="454"/>
        <end position="456"/>
    </location>
</feature>
<feature type="helix" evidence="40">
    <location>
        <begin position="470"/>
        <end position="478"/>
    </location>
</feature>
<feature type="turn" evidence="40">
    <location>
        <begin position="479"/>
        <end position="481"/>
    </location>
</feature>
<feature type="strand" evidence="41">
    <location>
        <begin position="482"/>
        <end position="484"/>
    </location>
</feature>
<feature type="helix" evidence="40">
    <location>
        <begin position="485"/>
        <end position="501"/>
    </location>
</feature>
<feature type="strand" evidence="40">
    <location>
        <begin position="505"/>
        <end position="517"/>
    </location>
</feature>
<feature type="strand" evidence="40">
    <location>
        <begin position="521"/>
        <end position="523"/>
    </location>
</feature>
<feature type="helix" evidence="40">
    <location>
        <begin position="535"/>
        <end position="537"/>
    </location>
</feature>
<feature type="strand" evidence="40">
    <location>
        <begin position="539"/>
        <end position="541"/>
    </location>
</feature>
<proteinExistence type="evidence at protein level"/>
<gene>
    <name evidence="10" type="primary">oppA</name>
    <name type="ordered locus">STM1746</name>
</gene>
<dbReference type="EMBL" id="X04194">
    <property type="protein sequence ID" value="CAA27785.1"/>
    <property type="molecule type" value="Genomic_DNA"/>
</dbReference>
<dbReference type="EMBL" id="X05491">
    <property type="protein sequence ID" value="CAA29039.1"/>
    <property type="molecule type" value="Genomic_DNA"/>
</dbReference>
<dbReference type="EMBL" id="AE006468">
    <property type="protein sequence ID" value="AAL20664.1"/>
    <property type="status" value="ALT_INIT"/>
    <property type="molecule type" value="Genomic_DNA"/>
</dbReference>
<dbReference type="PIR" id="A25011">
    <property type="entry name" value="QREBOA"/>
</dbReference>
<dbReference type="RefSeq" id="NP_460705.3">
    <property type="nucleotide sequence ID" value="NC_003197.2"/>
</dbReference>
<dbReference type="RefSeq" id="WP_000560668.1">
    <property type="nucleotide sequence ID" value="NC_003197.2"/>
</dbReference>
<dbReference type="PDB" id="1B05">
    <property type="method" value="X-ray"/>
    <property type="resolution" value="2.00 A"/>
    <property type="chains" value="A=27-543"/>
</dbReference>
<dbReference type="PDB" id="1B0H">
    <property type="method" value="X-ray"/>
    <property type="resolution" value="1.90 A"/>
    <property type="chains" value="A=27-543"/>
</dbReference>
<dbReference type="PDB" id="1B1H">
    <property type="method" value="X-ray"/>
    <property type="resolution" value="1.80 A"/>
    <property type="chains" value="A=27-543"/>
</dbReference>
<dbReference type="PDB" id="1B2H">
    <property type="method" value="X-ray"/>
    <property type="resolution" value="1.90 A"/>
    <property type="chains" value="A=27-543"/>
</dbReference>
<dbReference type="PDB" id="1B32">
    <property type="method" value="X-ray"/>
    <property type="resolution" value="1.75 A"/>
    <property type="chains" value="A=27-543"/>
</dbReference>
<dbReference type="PDB" id="1B3F">
    <property type="method" value="X-ray"/>
    <property type="resolution" value="1.80 A"/>
    <property type="chains" value="A=27-543"/>
</dbReference>
<dbReference type="PDB" id="1B3G">
    <property type="method" value="X-ray"/>
    <property type="resolution" value="2.00 A"/>
    <property type="chains" value="A=27-543"/>
</dbReference>
<dbReference type="PDB" id="1B3H">
    <property type="method" value="X-ray"/>
    <property type="resolution" value="2.00 A"/>
    <property type="chains" value="A=27-543"/>
</dbReference>
<dbReference type="PDB" id="1B3L">
    <property type="method" value="X-ray"/>
    <property type="resolution" value="2.00 A"/>
    <property type="chains" value="A/C=27-543"/>
</dbReference>
<dbReference type="PDB" id="1B40">
    <property type="method" value="X-ray"/>
    <property type="resolution" value="2.20 A"/>
    <property type="chains" value="A=27-543"/>
</dbReference>
<dbReference type="PDB" id="1B46">
    <property type="method" value="X-ray"/>
    <property type="resolution" value="1.80 A"/>
    <property type="chains" value="A=27-543"/>
</dbReference>
<dbReference type="PDB" id="1B4H">
    <property type="method" value="X-ray"/>
    <property type="resolution" value="1.90 A"/>
    <property type="chains" value="A=27-543"/>
</dbReference>
<dbReference type="PDB" id="1B4Z">
    <property type="method" value="X-ray"/>
    <property type="resolution" value="1.75 A"/>
    <property type="chains" value="A=27-543"/>
</dbReference>
<dbReference type="PDB" id="1B51">
    <property type="method" value="X-ray"/>
    <property type="resolution" value="1.80 A"/>
    <property type="chains" value="A=27-543"/>
</dbReference>
<dbReference type="PDB" id="1B52">
    <property type="method" value="X-ray"/>
    <property type="resolution" value="2.30 A"/>
    <property type="chains" value="A=27-543"/>
</dbReference>
<dbReference type="PDB" id="1B58">
    <property type="method" value="X-ray"/>
    <property type="resolution" value="1.80 A"/>
    <property type="chains" value="A=27-543"/>
</dbReference>
<dbReference type="PDB" id="1B5H">
    <property type="method" value="X-ray"/>
    <property type="resolution" value="1.90 A"/>
    <property type="chains" value="A=27-543"/>
</dbReference>
<dbReference type="PDB" id="1B5I">
    <property type="method" value="X-ray"/>
    <property type="resolution" value="1.90 A"/>
    <property type="chains" value="A=27-543"/>
</dbReference>
<dbReference type="PDB" id="1B5J">
    <property type="method" value="X-ray"/>
    <property type="resolution" value="1.80 A"/>
    <property type="chains" value="A=27-543"/>
</dbReference>
<dbReference type="PDB" id="1B6H">
    <property type="method" value="X-ray"/>
    <property type="resolution" value="1.80 A"/>
    <property type="chains" value="A=27-543"/>
</dbReference>
<dbReference type="PDB" id="1B7H">
    <property type="method" value="X-ray"/>
    <property type="resolution" value="2.00 A"/>
    <property type="chains" value="A=27-543"/>
</dbReference>
<dbReference type="PDB" id="1B9J">
    <property type="method" value="X-ray"/>
    <property type="resolution" value="1.80 A"/>
    <property type="chains" value="A=27-543"/>
</dbReference>
<dbReference type="PDB" id="1JET">
    <property type="method" value="X-ray"/>
    <property type="resolution" value="1.20 A"/>
    <property type="chains" value="A=27-543"/>
</dbReference>
<dbReference type="PDB" id="1JEU">
    <property type="method" value="X-ray"/>
    <property type="resolution" value="1.25 A"/>
    <property type="chains" value="A=27-543"/>
</dbReference>
<dbReference type="PDB" id="1JEV">
    <property type="method" value="X-ray"/>
    <property type="resolution" value="1.30 A"/>
    <property type="chains" value="A=27-543"/>
</dbReference>
<dbReference type="PDB" id="1OLA">
    <property type="method" value="X-ray"/>
    <property type="resolution" value="2.10 A"/>
    <property type="chains" value="A=27-543"/>
</dbReference>
<dbReference type="PDB" id="1OLC">
    <property type="method" value="X-ray"/>
    <property type="resolution" value="2.10 A"/>
    <property type="chains" value="A=27-543"/>
</dbReference>
<dbReference type="PDB" id="1QKA">
    <property type="method" value="X-ray"/>
    <property type="resolution" value="1.80 A"/>
    <property type="chains" value="A=27-543"/>
</dbReference>
<dbReference type="PDB" id="1QKB">
    <property type="method" value="X-ray"/>
    <property type="resolution" value="1.80 A"/>
    <property type="chains" value="A=27-543"/>
</dbReference>
<dbReference type="PDB" id="1RKM">
    <property type="method" value="X-ray"/>
    <property type="resolution" value="2.40 A"/>
    <property type="chains" value="A=27-543"/>
</dbReference>
<dbReference type="PDB" id="2OLB">
    <property type="method" value="X-ray"/>
    <property type="resolution" value="1.40 A"/>
    <property type="chains" value="A=27-543"/>
</dbReference>
<dbReference type="PDB" id="2RKM">
    <property type="method" value="X-ray"/>
    <property type="resolution" value="1.80 A"/>
    <property type="chains" value="A=27-543"/>
</dbReference>
<dbReference type="PDBsum" id="1B05"/>
<dbReference type="PDBsum" id="1B0H"/>
<dbReference type="PDBsum" id="1B1H"/>
<dbReference type="PDBsum" id="1B2H"/>
<dbReference type="PDBsum" id="1B32"/>
<dbReference type="PDBsum" id="1B3F"/>
<dbReference type="PDBsum" id="1B3G"/>
<dbReference type="PDBsum" id="1B3H"/>
<dbReference type="PDBsum" id="1B3L"/>
<dbReference type="PDBsum" id="1B40"/>
<dbReference type="PDBsum" id="1B46"/>
<dbReference type="PDBsum" id="1B4H"/>
<dbReference type="PDBsum" id="1B4Z"/>
<dbReference type="PDBsum" id="1B51"/>
<dbReference type="PDBsum" id="1B52"/>
<dbReference type="PDBsum" id="1B58"/>
<dbReference type="PDBsum" id="1B5H"/>
<dbReference type="PDBsum" id="1B5I"/>
<dbReference type="PDBsum" id="1B5J"/>
<dbReference type="PDBsum" id="1B6H"/>
<dbReference type="PDBsum" id="1B7H"/>
<dbReference type="PDBsum" id="1B9J"/>
<dbReference type="PDBsum" id="1JET"/>
<dbReference type="PDBsum" id="1JEU"/>
<dbReference type="PDBsum" id="1JEV"/>
<dbReference type="PDBsum" id="1OLA"/>
<dbReference type="PDBsum" id="1OLC"/>
<dbReference type="PDBsum" id="1QKA"/>
<dbReference type="PDBsum" id="1QKB"/>
<dbReference type="PDBsum" id="1RKM"/>
<dbReference type="PDBsum" id="2OLB"/>
<dbReference type="PDBsum" id="2RKM"/>
<dbReference type="BMRB" id="P06202"/>
<dbReference type="SMR" id="P06202"/>
<dbReference type="STRING" id="99287.STM1746"/>
<dbReference type="DrugBank" id="DB07365">
    <property type="generic name" value="1-Naphthyl-L-alanine"/>
</dbReference>
<dbReference type="TCDB" id="3.A.1.5.1">
    <property type="family name" value="the atp-binding cassette (abc) superfamily"/>
</dbReference>
<dbReference type="PaxDb" id="99287-STM1746"/>
<dbReference type="GeneID" id="1253265"/>
<dbReference type="KEGG" id="stm:STM1746"/>
<dbReference type="PATRIC" id="fig|99287.12.peg.1843"/>
<dbReference type="HOGENOM" id="CLU_017028_0_3_6"/>
<dbReference type="OMA" id="GEHEMAF"/>
<dbReference type="PhylomeDB" id="P06202"/>
<dbReference type="EvolutionaryTrace" id="P06202"/>
<dbReference type="Proteomes" id="UP000001014">
    <property type="component" value="Chromosome"/>
</dbReference>
<dbReference type="GO" id="GO:0043190">
    <property type="term" value="C:ATP-binding cassette (ABC) transporter complex"/>
    <property type="evidence" value="ECO:0007669"/>
    <property type="project" value="InterPro"/>
</dbReference>
<dbReference type="GO" id="GO:0030288">
    <property type="term" value="C:outer membrane-bounded periplasmic space"/>
    <property type="evidence" value="ECO:0000318"/>
    <property type="project" value="GO_Central"/>
</dbReference>
<dbReference type="GO" id="GO:1904680">
    <property type="term" value="F:peptide transmembrane transporter activity"/>
    <property type="evidence" value="ECO:0000318"/>
    <property type="project" value="GO_Central"/>
</dbReference>
<dbReference type="GO" id="GO:0015833">
    <property type="term" value="P:peptide transport"/>
    <property type="evidence" value="ECO:0000318"/>
    <property type="project" value="GO_Central"/>
</dbReference>
<dbReference type="GO" id="GO:0015031">
    <property type="term" value="P:protein transport"/>
    <property type="evidence" value="ECO:0007669"/>
    <property type="project" value="UniProtKB-KW"/>
</dbReference>
<dbReference type="CDD" id="cd08504">
    <property type="entry name" value="PBP2_OppA"/>
    <property type="match status" value="1"/>
</dbReference>
<dbReference type="FunFam" id="3.90.76.10:FF:000001">
    <property type="entry name" value="Oligopeptide ABC transporter substrate-binding protein"/>
    <property type="match status" value="1"/>
</dbReference>
<dbReference type="FunFam" id="3.10.105.10:FF:000001">
    <property type="entry name" value="Oligopeptide ABC transporter, oligopeptide-binding protein"/>
    <property type="match status" value="1"/>
</dbReference>
<dbReference type="FunFam" id="3.40.190.10:FF:000018">
    <property type="entry name" value="Oligopeptide ABC transporter, oligopeptide-binding protein"/>
    <property type="match status" value="1"/>
</dbReference>
<dbReference type="Gene3D" id="3.90.76.10">
    <property type="entry name" value="Dipeptide-binding Protein, Domain 1"/>
    <property type="match status" value="1"/>
</dbReference>
<dbReference type="Gene3D" id="3.10.105.10">
    <property type="entry name" value="Dipeptide-binding Protein, Domain 3"/>
    <property type="match status" value="1"/>
</dbReference>
<dbReference type="Gene3D" id="3.40.190.10">
    <property type="entry name" value="Periplasmic binding protein-like II"/>
    <property type="match status" value="1"/>
</dbReference>
<dbReference type="InterPro" id="IPR030678">
    <property type="entry name" value="Peptide/Ni-bd"/>
</dbReference>
<dbReference type="InterPro" id="IPR039424">
    <property type="entry name" value="SBP_5"/>
</dbReference>
<dbReference type="InterPro" id="IPR023765">
    <property type="entry name" value="SBP_5_CS"/>
</dbReference>
<dbReference type="InterPro" id="IPR000914">
    <property type="entry name" value="SBP_5_dom"/>
</dbReference>
<dbReference type="NCBIfam" id="NF011684">
    <property type="entry name" value="PRK15104.1"/>
    <property type="match status" value="1"/>
</dbReference>
<dbReference type="PANTHER" id="PTHR30290">
    <property type="entry name" value="PERIPLASMIC BINDING COMPONENT OF ABC TRANSPORTER"/>
    <property type="match status" value="1"/>
</dbReference>
<dbReference type="PANTHER" id="PTHR30290:SF10">
    <property type="entry name" value="PERIPLASMIC OLIGOPEPTIDE-BINDING PROTEIN-RELATED"/>
    <property type="match status" value="1"/>
</dbReference>
<dbReference type="Pfam" id="PF00496">
    <property type="entry name" value="SBP_bac_5"/>
    <property type="match status" value="1"/>
</dbReference>
<dbReference type="PIRSF" id="PIRSF002741">
    <property type="entry name" value="MppA"/>
    <property type="match status" value="1"/>
</dbReference>
<dbReference type="SUPFAM" id="SSF53850">
    <property type="entry name" value="Periplasmic binding protein-like II"/>
    <property type="match status" value="1"/>
</dbReference>
<dbReference type="PROSITE" id="PS01040">
    <property type="entry name" value="SBP_BACTERIAL_5"/>
    <property type="match status" value="1"/>
</dbReference>
<keyword id="KW-0002">3D-structure</keyword>
<keyword id="KW-0903">Direct protein sequencing</keyword>
<keyword id="KW-1015">Disulfide bond</keyword>
<keyword id="KW-0571">Peptide transport</keyword>
<keyword id="KW-0574">Periplasm</keyword>
<keyword id="KW-0653">Protein transport</keyword>
<keyword id="KW-1185">Reference proteome</keyword>
<keyword id="KW-0732">Signal</keyword>
<keyword id="KW-0813">Transport</keyword>
<accession>P06202</accession>
<evidence type="ECO:0000269" key="1">
    <source>
    </source>
</evidence>
<evidence type="ECO:0000269" key="2">
    <source>
    </source>
</evidence>
<evidence type="ECO:0000269" key="3">
    <source>
    </source>
</evidence>
<evidence type="ECO:0000269" key="4">
    <source>
    </source>
</evidence>
<evidence type="ECO:0000269" key="5">
    <source>
    </source>
</evidence>
<evidence type="ECO:0000269" key="6">
    <source>
    </source>
</evidence>
<evidence type="ECO:0000269" key="7">
    <source>
    </source>
</evidence>
<evidence type="ECO:0000269" key="8">
    <source>
    </source>
</evidence>
<evidence type="ECO:0000269" key="9">
    <source>
    </source>
</evidence>
<evidence type="ECO:0000303" key="10">
    <source>
    </source>
</evidence>
<evidence type="ECO:0000305" key="11"/>
<evidence type="ECO:0007744" key="12">
    <source>
        <dbReference type="PDB" id="1B05"/>
    </source>
</evidence>
<evidence type="ECO:0007744" key="13">
    <source>
        <dbReference type="PDB" id="1B0H"/>
    </source>
</evidence>
<evidence type="ECO:0007744" key="14">
    <source>
        <dbReference type="PDB" id="1B1H"/>
    </source>
</evidence>
<evidence type="ECO:0007744" key="15">
    <source>
        <dbReference type="PDB" id="1B2H"/>
    </source>
</evidence>
<evidence type="ECO:0007744" key="16">
    <source>
        <dbReference type="PDB" id="1B32"/>
    </source>
</evidence>
<evidence type="ECO:0007744" key="17">
    <source>
        <dbReference type="PDB" id="1B3F"/>
    </source>
</evidence>
<evidence type="ECO:0007744" key="18">
    <source>
        <dbReference type="PDB" id="1B3G"/>
    </source>
</evidence>
<evidence type="ECO:0007744" key="19">
    <source>
        <dbReference type="PDB" id="1B3H"/>
    </source>
</evidence>
<evidence type="ECO:0007744" key="20">
    <source>
        <dbReference type="PDB" id="1B3L"/>
    </source>
</evidence>
<evidence type="ECO:0007744" key="21">
    <source>
        <dbReference type="PDB" id="1B40"/>
    </source>
</evidence>
<evidence type="ECO:0007744" key="22">
    <source>
        <dbReference type="PDB" id="1B46"/>
    </source>
</evidence>
<evidence type="ECO:0007744" key="23">
    <source>
        <dbReference type="PDB" id="1B4H"/>
    </source>
</evidence>
<evidence type="ECO:0007744" key="24">
    <source>
        <dbReference type="PDB" id="1B4Z"/>
    </source>
</evidence>
<evidence type="ECO:0007744" key="25">
    <source>
        <dbReference type="PDB" id="1B51"/>
    </source>
</evidence>
<evidence type="ECO:0007744" key="26">
    <source>
        <dbReference type="PDB" id="1B52"/>
    </source>
</evidence>
<evidence type="ECO:0007744" key="27">
    <source>
        <dbReference type="PDB" id="1B58"/>
    </source>
</evidence>
<evidence type="ECO:0007744" key="28">
    <source>
        <dbReference type="PDB" id="1B5H"/>
    </source>
</evidence>
<evidence type="ECO:0007744" key="29">
    <source>
        <dbReference type="PDB" id="1B6H"/>
    </source>
</evidence>
<evidence type="ECO:0007744" key="30">
    <source>
        <dbReference type="PDB" id="1B7H"/>
    </source>
</evidence>
<evidence type="ECO:0007744" key="31">
    <source>
        <dbReference type="PDB" id="1JET"/>
    </source>
</evidence>
<evidence type="ECO:0007744" key="32">
    <source>
        <dbReference type="PDB" id="1JEU"/>
    </source>
</evidence>
<evidence type="ECO:0007744" key="33">
    <source>
        <dbReference type="PDB" id="1JEV"/>
    </source>
</evidence>
<evidence type="ECO:0007744" key="34">
    <source>
        <dbReference type="PDB" id="1OLA"/>
    </source>
</evidence>
<evidence type="ECO:0007744" key="35">
    <source>
        <dbReference type="PDB" id="1OLC"/>
    </source>
</evidence>
<evidence type="ECO:0007744" key="36">
    <source>
        <dbReference type="PDB" id="1RKM"/>
    </source>
</evidence>
<evidence type="ECO:0007744" key="37">
    <source>
        <dbReference type="PDB" id="2OLB"/>
    </source>
</evidence>
<evidence type="ECO:0007744" key="38">
    <source>
        <dbReference type="PDB" id="2RKM"/>
    </source>
</evidence>
<evidence type="ECO:0007829" key="39">
    <source>
        <dbReference type="PDB" id="1B1H"/>
    </source>
</evidence>
<evidence type="ECO:0007829" key="40">
    <source>
        <dbReference type="PDB" id="1JET"/>
    </source>
</evidence>
<evidence type="ECO:0007829" key="41">
    <source>
        <dbReference type="PDB" id="1JEU"/>
    </source>
</evidence>
<reference key="1">
    <citation type="journal article" date="1986" name="Eur. J. Biochem.">
        <title>Peptide uptake by Salmonella typhimurium. The periplasmic oligopeptide-binding protein.</title>
        <authorList>
            <person name="Hiles I.D."/>
            <person name="Higgins C.F."/>
        </authorList>
    </citation>
    <scope>NUCLEOTIDE SEQUENCE [GENOMIC DNA]</scope>
    <scope>PROTEIN SEQUENCE OF 27-41</scope>
    <scope>SUBCELLULAR LOCATION</scope>
</reference>
<reference key="2">
    <citation type="journal article" date="1987" name="J. Mol. Biol.">
        <title>Molecular characterization of the oligopeptide permease of Salmonella typhimurium.</title>
        <authorList>
            <person name="Hiles I.D."/>
            <person name="Gallagher M.P."/>
            <person name="Jamieson D.J."/>
            <person name="Higgins C.F."/>
        </authorList>
    </citation>
    <scope>NUCLEOTIDE SEQUENCE [GENOMIC DNA]</scope>
    <scope>FUNCTION</scope>
    <scope>SUBUNIT</scope>
    <scope>SUBCELLULAR LOCATION</scope>
    <scope>INDUCTION</scope>
    <source>
        <strain>LT2</strain>
    </source>
</reference>
<reference key="3">
    <citation type="journal article" date="2001" name="Nature">
        <title>Complete genome sequence of Salmonella enterica serovar Typhimurium LT2.</title>
        <authorList>
            <person name="McClelland M."/>
            <person name="Sanderson K.E."/>
            <person name="Spieth J."/>
            <person name="Clifton S.W."/>
            <person name="Latreille P."/>
            <person name="Courtney L."/>
            <person name="Porwollik S."/>
            <person name="Ali J."/>
            <person name="Dante M."/>
            <person name="Du F."/>
            <person name="Hou S."/>
            <person name="Layman D."/>
            <person name="Leonard S."/>
            <person name="Nguyen C."/>
            <person name="Scott K."/>
            <person name="Holmes A."/>
            <person name="Grewal N."/>
            <person name="Mulvaney E."/>
            <person name="Ryan E."/>
            <person name="Sun H."/>
            <person name="Florea L."/>
            <person name="Miller W."/>
            <person name="Stoneking T."/>
            <person name="Nhan M."/>
            <person name="Waterston R."/>
            <person name="Wilson R.K."/>
        </authorList>
    </citation>
    <scope>NUCLEOTIDE SEQUENCE [LARGE SCALE GENOMIC DNA]</scope>
    <source>
        <strain>LT2 / SGSC1412 / ATCC 700720</strain>
    </source>
</reference>
<reference key="4">
    <citation type="journal article" date="1987" name="J. Bacteriol.">
        <title>Uptake of cell wall peptides by Salmonella typhimurium and Escherichia coli.</title>
        <authorList>
            <person name="Goodell E.W."/>
            <person name="Higgins C.F."/>
        </authorList>
    </citation>
    <scope>FUNCTION</scope>
    <scope>DISRUPTION PHENOTYPE</scope>
    <source>
        <strain>LT2</strain>
    </source>
</reference>
<reference evidence="34" key="5">
    <citation type="journal article" date="1994" name="Science">
        <title>The structural basis of sequence-independent peptide binding by OppA protein.</title>
        <authorList>
            <person name="Tame J.R.H."/>
            <person name="Murshudov G.N."/>
            <person name="Dodson E.J."/>
            <person name="Neil T.K."/>
            <person name="Dodson G.G."/>
            <person name="Higgins C.F."/>
            <person name="Wilkinson A.J."/>
        </authorList>
    </citation>
    <scope>X-RAY CRYSTALLOGRAPHY (2.10 ANGSTROMS) OF 27-543 IN COMPLEX WITH A TETRAPEPTIDE</scope>
    <scope>FUNCTION</scope>
    <scope>DISULFIDE BOND</scope>
</reference>
<reference evidence="35 37" key="6">
    <citation type="journal article" date="1995" name="Structure">
        <title>The crystal structures of the oligopeptide-binding protein OppA complexed with tripeptide and tetrapeptide ligands.</title>
        <authorList>
            <person name="Tame J.R.H."/>
            <person name="Dodson E.J."/>
            <person name="Murshudov G.N."/>
            <person name="Higgins C.F."/>
            <person name="Wilkinson A.J."/>
        </authorList>
    </citation>
    <scope>X-RAY CRYSTALLOGRAPHY (1.40 ANGSTROMS) OF 27-543 IN COMPLEXES WITH A TRIPEPTIDE AND A TETRAPEPTIDE</scope>
    <scope>FUNCTION</scope>
    <scope>DOMAIN</scope>
    <scope>DISULFIDE BOND</scope>
</reference>
<reference evidence="31 32 33" key="7">
    <citation type="journal article" date="1996" name="Nat. Struct. Biol.">
        <title>The role of water in sequence-independent ligand binding by an oligopeptide transporter protein.</title>
        <authorList>
            <person name="Tame J.R."/>
            <person name="Sleigh S.H."/>
            <person name="Wilkinson A.J."/>
            <person name="Ladbury J.E."/>
        </authorList>
    </citation>
    <scope>X-RAY CRYSTALLOGRAPHY (1.20 ANGSTROMS) OF 27-543 IN COMPLEXES WITH TRIPEPTIDES</scope>
    <scope>FUNCTION</scope>
    <scope>DOMAIN</scope>
    <scope>DISULFIDE BOND</scope>
</reference>
<reference evidence="36 38" key="8">
    <citation type="journal article" date="1997" name="Biochemistry">
        <title>Peptide binding in OppA, the crystal structures of the periplasmic oligopeptide binding protein in the unliganded form and in complex with lysyllysine.</title>
        <authorList>
            <person name="Sleigh S.H."/>
            <person name="Tame J.R."/>
            <person name="Dodson E.J."/>
            <person name="Wilkinson A.J."/>
        </authorList>
    </citation>
    <scope>X-RAY CRYSTALLOGRAPHY (1.80 ANGSTROMS) OF 27-543 OF APOPROTEIN AND IN COMPLEX WITH A DIPEPTIDE</scope>
    <scope>FUNCTION</scope>
    <scope>DISULFIDE BOND</scope>
</reference>
<reference evidence="13 14 15 19 23 28 29 30" key="9">
    <citation type="journal article" date="1999" name="Protein Sci.">
        <title>Relating structure to thermodynamics: the crystal structures and binding affinity of eight OppA-peptide complexes.</title>
        <authorList>
            <person name="Davies T.G."/>
            <person name="Hubbard R.E."/>
            <person name="Tame J.R.H."/>
        </authorList>
    </citation>
    <scope>X-RAY CRYSTALLOGRAPHY (1.80 ANGSTROMS) OF 27-543 IN COMPLEXES WITH TRIPEPTIDES CONTAINING AN ABNORMAL RESIDUE</scope>
    <scope>DISULFIDE BOND</scope>
</reference>
<reference evidence="12 16 17 18 20 21 22 24 25 26 27" key="10">
    <citation type="journal article" date="1999" name="J. Mol. Biol.">
        <title>Crystallographic and calorimetric analysis of peptide binding to OppA protein.</title>
        <authorList>
            <person name="Sleigh S.H."/>
            <person name="Seavers P.R."/>
            <person name="Wilkinson A.J."/>
            <person name="Ladbury J.E."/>
            <person name="Tame J.R.H."/>
        </authorList>
    </citation>
    <scope>X-RAY CRYSTALLOGRAPHY (1.75 ANGSTROMS) OF 27-543 IN COMPLEXES WITH LYS-X-LYS TRIPEPTIDES</scope>
    <scope>FUNCTION</scope>
    <scope>DOMAIN</scope>
    <scope>DISULFIDE BOND</scope>
</reference>
<comment type="function">
    <text evidence="2 3 4 6 7 8 9">Part of the ABC transporter complex OppABCDF involved in the uptake of oligopeptides, including the cell wall murein tripeptide L-alanyl-gamma-D-glutamyl-meso-diaminopimelate (PubMed:2821267, PubMed:3301822). Plays an important nutritional role and is involved in the recycling of cell wall peptides (PubMed:2821267, PubMed:3301822). Binds peptides containing from two to five amino acid residues regardless of their sequence (PubMed:10438628, PubMed:8202710, PubMed:8747465, PubMed:8946852, PubMed:9245406). Also binds cell wall peptides, such as L-alanyl-gamma-D-glutamyl-meso-diaminopimelate (PubMed:3301822).</text>
</comment>
<comment type="subunit">
    <text evidence="3">The complex is composed of two ATP-binding proteins (OppD and OppF), two transmembrane proteins (OppB and OppC) and a solute-binding protein (OppA).</text>
</comment>
<comment type="subcellular location">
    <subcellularLocation>
        <location evidence="3 5">Periplasm</location>
    </subcellularLocation>
</comment>
<comment type="induction">
    <text evidence="3">Part of the opp operon, which is constitutively expressed.</text>
</comment>
<comment type="domain">
    <text evidence="2 7 8">Accommodates the ligand side chains in large hydrated pockets which impose little specificity on binding (PubMed:10438628, PubMed:8747465, PubMed:8946852). Tight binding is achieved by utilising the hydrogen-bonding potential of the main chain of the ligand (PubMed:10438628, PubMed:8747465).</text>
</comment>
<comment type="disruption phenotype">
    <text evidence="4">Mutant cannot take up cell wall peptides.</text>
</comment>
<comment type="miscellaneous">
    <text evidence="9">Isothermal titration calorimetric measurements of the binding of lysine-containing peptides of different lengths to OppA show that the dipeptide Lys-Lys is bound with 60-fold lower affinity than related tri- and tetrapeptides (Lys-Lys-Lys and Lys-Lys-Lys-Ala, respectively).</text>
</comment>
<comment type="similarity">
    <text evidence="11">Belongs to the bacterial solute-binding protein 5 family.</text>
</comment>
<comment type="sequence caution" evidence="11">
    <conflict type="erroneous initiation">
        <sequence resource="EMBL-CDS" id="AAL20664"/>
    </conflict>
    <text>Extended N-terminus.</text>
</comment>
<name>OPPA_SALTY</name>
<organism>
    <name type="scientific">Salmonella typhimurium (strain LT2 / SGSC1412 / ATCC 700720)</name>
    <dbReference type="NCBI Taxonomy" id="99287"/>
    <lineage>
        <taxon>Bacteria</taxon>
        <taxon>Pseudomonadati</taxon>
        <taxon>Pseudomonadota</taxon>
        <taxon>Gammaproteobacteria</taxon>
        <taxon>Enterobacterales</taxon>
        <taxon>Enterobacteriaceae</taxon>
        <taxon>Salmonella</taxon>
    </lineage>
</organism>
<sequence length="543" mass="61292">MSNITKKSLIAAGILTALIAASAATAADVPAGVQLADKQTLVRNNGSEVQSLDPHKIEGVPESNVSRDLFEGLLISDVEGHPSPGVAEKWENKDFKVWTFHLRENAKWSDGTPVTAHDFVYSWQRLADPNTASPYASYLQYGHIANIDDIIAGKKPATDLGVKALDDHTFEVTLSEPVPYFYKLLVHPSVSPVPKSAVEKFGDKWTQPANIVTNGAYKLKNWVVNERIVLERNPQYWDNAKTVINQVTYLPISSEVTDVNRYRSGEIDMTYNNMPIELFQKLKKEIPNEVRVDPYLCTYYYEINNQKAPFNDVRVRTALKLALDRDIIVNKVKNQGDLPAYSYTPPYTDGAKLVEPEWFKWSQQKRNEEAKKLLAEAGFTADKPLTFDLLYNTSDLHKKLAIAVASIWKKNLGVNVNLENQEWKTFLDTRHQGTFDVARAGWCADYNEPTSFLNTMLSDSSNNTAHYKSPAFDKLIADTLKVADDTQRSELYAKAEQQLDKDSAIVPVYYYVNARLVKPWVGGYTGKDPLDNIYVKNLYIIKH</sequence>